<accession>A5UFJ8</accession>
<gene>
    <name evidence="1" type="primary">lipA</name>
    <name type="ordered locus">CGSHiGG_02615</name>
</gene>
<sequence>MSTPFKMERGVKYRDAAKTSIIPVKNIDPNQELLKKPEWMKIKLPASSAKIESIKNGMRRHGLHSVCEEASCPNLHECFNHGTATFMILGAICTRRCPFCDVAHGKPLPPDPEEPQKLAETIQDMKLKYVVITSVDRDDLPDRGAGHFSECVKAVRELNPNIKIEILVPDFRGRVTQALEKLKDNPPDVFNHNLENVPRLYKEIRPGADYEWSLKLLREFKEMFPNIPTKSGLMVGLGETNEEILQVMQDLRDNGVTMLTLGQYLQPSRHHLPVARYVPPTEFDIFRDKANEMGFEHAACGPFVRSSYHADLQASGGLVK</sequence>
<reference key="1">
    <citation type="journal article" date="2007" name="Genome Biol.">
        <title>Characterization and modeling of the Haemophilus influenzae core and supragenomes based on the complete genomic sequences of Rd and 12 clinical nontypeable strains.</title>
        <authorList>
            <person name="Hogg J.S."/>
            <person name="Hu F.Z."/>
            <person name="Janto B."/>
            <person name="Boissy R."/>
            <person name="Hayes J."/>
            <person name="Keefe R."/>
            <person name="Post J.C."/>
            <person name="Ehrlich G.D."/>
        </authorList>
    </citation>
    <scope>NUCLEOTIDE SEQUENCE [LARGE SCALE GENOMIC DNA]</scope>
    <source>
        <strain>PittGG</strain>
    </source>
</reference>
<proteinExistence type="inferred from homology"/>
<comment type="function">
    <text evidence="1">Catalyzes the radical-mediated insertion of two sulfur atoms into the C-6 and C-8 positions of the octanoyl moiety bound to the lipoyl domains of lipoate-dependent enzymes, thereby converting the octanoylated domains into lipoylated derivatives.</text>
</comment>
<comment type="catalytic activity">
    <reaction evidence="1">
        <text>[[Fe-S] cluster scaffold protein carrying a second [4Fe-4S](2+) cluster] + N(6)-octanoyl-L-lysyl-[protein] + 2 oxidized [2Fe-2S]-[ferredoxin] + 2 S-adenosyl-L-methionine + 4 H(+) = [[Fe-S] cluster scaffold protein] + N(6)-[(R)-dihydrolipoyl]-L-lysyl-[protein] + 4 Fe(3+) + 2 hydrogen sulfide + 2 5'-deoxyadenosine + 2 L-methionine + 2 reduced [2Fe-2S]-[ferredoxin]</text>
        <dbReference type="Rhea" id="RHEA:16585"/>
        <dbReference type="Rhea" id="RHEA-COMP:9928"/>
        <dbReference type="Rhea" id="RHEA-COMP:10000"/>
        <dbReference type="Rhea" id="RHEA-COMP:10001"/>
        <dbReference type="Rhea" id="RHEA-COMP:10475"/>
        <dbReference type="Rhea" id="RHEA-COMP:14568"/>
        <dbReference type="Rhea" id="RHEA-COMP:14569"/>
        <dbReference type="ChEBI" id="CHEBI:15378"/>
        <dbReference type="ChEBI" id="CHEBI:17319"/>
        <dbReference type="ChEBI" id="CHEBI:29034"/>
        <dbReference type="ChEBI" id="CHEBI:29919"/>
        <dbReference type="ChEBI" id="CHEBI:33722"/>
        <dbReference type="ChEBI" id="CHEBI:33737"/>
        <dbReference type="ChEBI" id="CHEBI:33738"/>
        <dbReference type="ChEBI" id="CHEBI:57844"/>
        <dbReference type="ChEBI" id="CHEBI:59789"/>
        <dbReference type="ChEBI" id="CHEBI:78809"/>
        <dbReference type="ChEBI" id="CHEBI:83100"/>
        <dbReference type="EC" id="2.8.1.8"/>
    </reaction>
</comment>
<comment type="cofactor">
    <cofactor evidence="1">
        <name>[4Fe-4S] cluster</name>
        <dbReference type="ChEBI" id="CHEBI:49883"/>
    </cofactor>
    <text evidence="1">Binds 2 [4Fe-4S] clusters per subunit. One cluster is coordinated with 3 cysteines and an exchangeable S-adenosyl-L-methionine.</text>
</comment>
<comment type="pathway">
    <text evidence="1">Protein modification; protein lipoylation via endogenous pathway; protein N(6)-(lipoyl)lysine from octanoyl-[acyl-carrier-protein]: step 2/2.</text>
</comment>
<comment type="subcellular location">
    <subcellularLocation>
        <location evidence="1">Cytoplasm</location>
    </subcellularLocation>
</comment>
<comment type="similarity">
    <text evidence="1">Belongs to the radical SAM superfamily. Lipoyl synthase family.</text>
</comment>
<keyword id="KW-0004">4Fe-4S</keyword>
<keyword id="KW-0963">Cytoplasm</keyword>
<keyword id="KW-0408">Iron</keyword>
<keyword id="KW-0411">Iron-sulfur</keyword>
<keyword id="KW-0479">Metal-binding</keyword>
<keyword id="KW-0949">S-adenosyl-L-methionine</keyword>
<keyword id="KW-0808">Transferase</keyword>
<organism>
    <name type="scientific">Haemophilus influenzae (strain PittGG)</name>
    <dbReference type="NCBI Taxonomy" id="374931"/>
    <lineage>
        <taxon>Bacteria</taxon>
        <taxon>Pseudomonadati</taxon>
        <taxon>Pseudomonadota</taxon>
        <taxon>Gammaproteobacteria</taxon>
        <taxon>Pasteurellales</taxon>
        <taxon>Pasteurellaceae</taxon>
        <taxon>Haemophilus</taxon>
    </lineage>
</organism>
<evidence type="ECO:0000255" key="1">
    <source>
        <dbReference type="HAMAP-Rule" id="MF_00206"/>
    </source>
</evidence>
<evidence type="ECO:0000255" key="2">
    <source>
        <dbReference type="PROSITE-ProRule" id="PRU01266"/>
    </source>
</evidence>
<name>LIPA_HAEIG</name>
<feature type="chain" id="PRO_1000012229" description="Lipoyl synthase">
    <location>
        <begin position="1"/>
        <end position="320"/>
    </location>
</feature>
<feature type="domain" description="Radical SAM core" evidence="2">
    <location>
        <begin position="79"/>
        <end position="296"/>
    </location>
</feature>
<feature type="binding site" evidence="1">
    <location>
        <position position="67"/>
    </location>
    <ligand>
        <name>[4Fe-4S] cluster</name>
        <dbReference type="ChEBI" id="CHEBI:49883"/>
        <label>1</label>
    </ligand>
</feature>
<feature type="binding site" evidence="1">
    <location>
        <position position="72"/>
    </location>
    <ligand>
        <name>[4Fe-4S] cluster</name>
        <dbReference type="ChEBI" id="CHEBI:49883"/>
        <label>1</label>
    </ligand>
</feature>
<feature type="binding site" evidence="1">
    <location>
        <position position="78"/>
    </location>
    <ligand>
        <name>[4Fe-4S] cluster</name>
        <dbReference type="ChEBI" id="CHEBI:49883"/>
        <label>1</label>
    </ligand>
</feature>
<feature type="binding site" evidence="1">
    <location>
        <position position="93"/>
    </location>
    <ligand>
        <name>[4Fe-4S] cluster</name>
        <dbReference type="ChEBI" id="CHEBI:49883"/>
        <label>2</label>
        <note>4Fe-4S-S-AdoMet</note>
    </ligand>
</feature>
<feature type="binding site" evidence="1">
    <location>
        <position position="97"/>
    </location>
    <ligand>
        <name>[4Fe-4S] cluster</name>
        <dbReference type="ChEBI" id="CHEBI:49883"/>
        <label>2</label>
        <note>4Fe-4S-S-AdoMet</note>
    </ligand>
</feature>
<feature type="binding site" evidence="1">
    <location>
        <position position="100"/>
    </location>
    <ligand>
        <name>[4Fe-4S] cluster</name>
        <dbReference type="ChEBI" id="CHEBI:49883"/>
        <label>2</label>
        <note>4Fe-4S-S-AdoMet</note>
    </ligand>
</feature>
<feature type="binding site" evidence="1">
    <location>
        <position position="307"/>
    </location>
    <ligand>
        <name>[4Fe-4S] cluster</name>
        <dbReference type="ChEBI" id="CHEBI:49883"/>
        <label>1</label>
    </ligand>
</feature>
<protein>
    <recommendedName>
        <fullName evidence="1">Lipoyl synthase</fullName>
        <ecNumber evidence="1">2.8.1.8</ecNumber>
    </recommendedName>
    <alternativeName>
        <fullName evidence="1">Lip-syn</fullName>
        <shortName evidence="1">LS</shortName>
    </alternativeName>
    <alternativeName>
        <fullName evidence="1">Lipoate synthase</fullName>
    </alternativeName>
    <alternativeName>
        <fullName evidence="1">Lipoic acid synthase</fullName>
    </alternativeName>
    <alternativeName>
        <fullName evidence="1">Sulfur insertion protein LipA</fullName>
    </alternativeName>
</protein>
<dbReference type="EC" id="2.8.1.8" evidence="1"/>
<dbReference type="EMBL" id="CP000672">
    <property type="protein sequence ID" value="ABQ99553.1"/>
    <property type="molecule type" value="Genomic_DNA"/>
</dbReference>
<dbReference type="SMR" id="A5UFJ8"/>
<dbReference type="KEGG" id="hiq:CGSHiGG_02615"/>
<dbReference type="HOGENOM" id="CLU_033144_2_1_6"/>
<dbReference type="UniPathway" id="UPA00538">
    <property type="reaction ID" value="UER00593"/>
</dbReference>
<dbReference type="Proteomes" id="UP000001990">
    <property type="component" value="Chromosome"/>
</dbReference>
<dbReference type="GO" id="GO:0005737">
    <property type="term" value="C:cytoplasm"/>
    <property type="evidence" value="ECO:0007669"/>
    <property type="project" value="UniProtKB-SubCell"/>
</dbReference>
<dbReference type="GO" id="GO:0051539">
    <property type="term" value="F:4 iron, 4 sulfur cluster binding"/>
    <property type="evidence" value="ECO:0007669"/>
    <property type="project" value="UniProtKB-UniRule"/>
</dbReference>
<dbReference type="GO" id="GO:0016992">
    <property type="term" value="F:lipoate synthase activity"/>
    <property type="evidence" value="ECO:0007669"/>
    <property type="project" value="UniProtKB-UniRule"/>
</dbReference>
<dbReference type="GO" id="GO:0046872">
    <property type="term" value="F:metal ion binding"/>
    <property type="evidence" value="ECO:0007669"/>
    <property type="project" value="UniProtKB-KW"/>
</dbReference>
<dbReference type="CDD" id="cd01335">
    <property type="entry name" value="Radical_SAM"/>
    <property type="match status" value="1"/>
</dbReference>
<dbReference type="FunFam" id="3.20.20.70:FF:000023">
    <property type="entry name" value="Lipoyl synthase"/>
    <property type="match status" value="1"/>
</dbReference>
<dbReference type="Gene3D" id="3.20.20.70">
    <property type="entry name" value="Aldolase class I"/>
    <property type="match status" value="1"/>
</dbReference>
<dbReference type="HAMAP" id="MF_00206">
    <property type="entry name" value="Lipoyl_synth"/>
    <property type="match status" value="1"/>
</dbReference>
<dbReference type="InterPro" id="IPR013785">
    <property type="entry name" value="Aldolase_TIM"/>
</dbReference>
<dbReference type="InterPro" id="IPR006638">
    <property type="entry name" value="Elp3/MiaA/NifB-like_rSAM"/>
</dbReference>
<dbReference type="InterPro" id="IPR031691">
    <property type="entry name" value="LIAS_N"/>
</dbReference>
<dbReference type="InterPro" id="IPR003698">
    <property type="entry name" value="Lipoyl_synth"/>
</dbReference>
<dbReference type="InterPro" id="IPR007197">
    <property type="entry name" value="rSAM"/>
</dbReference>
<dbReference type="NCBIfam" id="TIGR00510">
    <property type="entry name" value="lipA"/>
    <property type="match status" value="1"/>
</dbReference>
<dbReference type="NCBIfam" id="NF004019">
    <property type="entry name" value="PRK05481.1"/>
    <property type="match status" value="1"/>
</dbReference>
<dbReference type="NCBIfam" id="NF009544">
    <property type="entry name" value="PRK12928.1"/>
    <property type="match status" value="1"/>
</dbReference>
<dbReference type="PANTHER" id="PTHR10949">
    <property type="entry name" value="LIPOYL SYNTHASE"/>
    <property type="match status" value="1"/>
</dbReference>
<dbReference type="PANTHER" id="PTHR10949:SF0">
    <property type="entry name" value="LIPOYL SYNTHASE, MITOCHONDRIAL"/>
    <property type="match status" value="1"/>
</dbReference>
<dbReference type="Pfam" id="PF16881">
    <property type="entry name" value="LIAS_N"/>
    <property type="match status" value="1"/>
</dbReference>
<dbReference type="Pfam" id="PF04055">
    <property type="entry name" value="Radical_SAM"/>
    <property type="match status" value="1"/>
</dbReference>
<dbReference type="PIRSF" id="PIRSF005963">
    <property type="entry name" value="Lipoyl_synth"/>
    <property type="match status" value="1"/>
</dbReference>
<dbReference type="SFLD" id="SFLDF00271">
    <property type="entry name" value="lipoyl_synthase"/>
    <property type="match status" value="1"/>
</dbReference>
<dbReference type="SFLD" id="SFLDS00029">
    <property type="entry name" value="Radical_SAM"/>
    <property type="match status" value="1"/>
</dbReference>
<dbReference type="SMART" id="SM00729">
    <property type="entry name" value="Elp3"/>
    <property type="match status" value="1"/>
</dbReference>
<dbReference type="SUPFAM" id="SSF102114">
    <property type="entry name" value="Radical SAM enzymes"/>
    <property type="match status" value="1"/>
</dbReference>
<dbReference type="PROSITE" id="PS51918">
    <property type="entry name" value="RADICAL_SAM"/>
    <property type="match status" value="1"/>
</dbReference>